<evidence type="ECO:0000255" key="1">
    <source>
        <dbReference type="HAMAP-Rule" id="MF_00203"/>
    </source>
</evidence>
<comment type="function">
    <text evidence="1">The UvrABC repair system catalyzes the recognition and processing of DNA lesions. UvrC both incises the 5' and 3' sides of the lesion. The N-terminal half is responsible for the 3' incision and the C-terminal half is responsible for the 5' incision.</text>
</comment>
<comment type="subunit">
    <text evidence="1">Interacts with UvrB in an incision complex.</text>
</comment>
<comment type="subcellular location">
    <subcellularLocation>
        <location evidence="1">Cytoplasm</location>
    </subcellularLocation>
</comment>
<comment type="similarity">
    <text evidence="1">Belongs to the UvrC family.</text>
</comment>
<dbReference type="EMBL" id="CP000259">
    <property type="protein sequence ID" value="ABF32093.1"/>
    <property type="molecule type" value="Genomic_DNA"/>
</dbReference>
<dbReference type="RefSeq" id="WP_002984829.1">
    <property type="nucleotide sequence ID" value="NC_008021.1"/>
</dbReference>
<dbReference type="SMR" id="Q1JLX6"/>
<dbReference type="GeneID" id="69900920"/>
<dbReference type="KEGG" id="spk:MGAS9429_Spy0905"/>
<dbReference type="HOGENOM" id="CLU_014841_3_2_9"/>
<dbReference type="Proteomes" id="UP000002433">
    <property type="component" value="Chromosome"/>
</dbReference>
<dbReference type="GO" id="GO:0005737">
    <property type="term" value="C:cytoplasm"/>
    <property type="evidence" value="ECO:0007669"/>
    <property type="project" value="UniProtKB-SubCell"/>
</dbReference>
<dbReference type="GO" id="GO:0009380">
    <property type="term" value="C:excinuclease repair complex"/>
    <property type="evidence" value="ECO:0007669"/>
    <property type="project" value="InterPro"/>
</dbReference>
<dbReference type="GO" id="GO:0003677">
    <property type="term" value="F:DNA binding"/>
    <property type="evidence" value="ECO:0007669"/>
    <property type="project" value="UniProtKB-UniRule"/>
</dbReference>
<dbReference type="GO" id="GO:0009381">
    <property type="term" value="F:excinuclease ABC activity"/>
    <property type="evidence" value="ECO:0007669"/>
    <property type="project" value="UniProtKB-UniRule"/>
</dbReference>
<dbReference type="GO" id="GO:0006289">
    <property type="term" value="P:nucleotide-excision repair"/>
    <property type="evidence" value="ECO:0007669"/>
    <property type="project" value="UniProtKB-UniRule"/>
</dbReference>
<dbReference type="GO" id="GO:0009432">
    <property type="term" value="P:SOS response"/>
    <property type="evidence" value="ECO:0007669"/>
    <property type="project" value="UniProtKB-UniRule"/>
</dbReference>
<dbReference type="CDD" id="cd10434">
    <property type="entry name" value="GIY-YIG_UvrC_Cho"/>
    <property type="match status" value="1"/>
</dbReference>
<dbReference type="FunFam" id="3.30.420.340:FF:000002">
    <property type="entry name" value="UvrABC system protein C"/>
    <property type="match status" value="1"/>
</dbReference>
<dbReference type="FunFam" id="3.40.1440.10:FF:000001">
    <property type="entry name" value="UvrABC system protein C"/>
    <property type="match status" value="1"/>
</dbReference>
<dbReference type="Gene3D" id="1.10.150.20">
    <property type="entry name" value="5' to 3' exonuclease, C-terminal subdomain"/>
    <property type="match status" value="1"/>
</dbReference>
<dbReference type="Gene3D" id="3.40.1440.10">
    <property type="entry name" value="GIY-YIG endonuclease"/>
    <property type="match status" value="1"/>
</dbReference>
<dbReference type="Gene3D" id="4.10.860.10">
    <property type="entry name" value="UVR domain"/>
    <property type="match status" value="1"/>
</dbReference>
<dbReference type="Gene3D" id="3.30.420.340">
    <property type="entry name" value="UvrC, RNAse H endonuclease domain"/>
    <property type="match status" value="1"/>
</dbReference>
<dbReference type="HAMAP" id="MF_00203">
    <property type="entry name" value="UvrC"/>
    <property type="match status" value="1"/>
</dbReference>
<dbReference type="InterPro" id="IPR000305">
    <property type="entry name" value="GIY-YIG_endonuc"/>
</dbReference>
<dbReference type="InterPro" id="IPR035901">
    <property type="entry name" value="GIY-YIG_endonuc_sf"/>
</dbReference>
<dbReference type="InterPro" id="IPR047296">
    <property type="entry name" value="GIY-YIG_UvrC_Cho"/>
</dbReference>
<dbReference type="InterPro" id="IPR010994">
    <property type="entry name" value="RuvA_2-like"/>
</dbReference>
<dbReference type="InterPro" id="IPR001943">
    <property type="entry name" value="UVR_dom"/>
</dbReference>
<dbReference type="InterPro" id="IPR036876">
    <property type="entry name" value="UVR_dom_sf"/>
</dbReference>
<dbReference type="InterPro" id="IPR050066">
    <property type="entry name" value="UvrABC_protein_C"/>
</dbReference>
<dbReference type="InterPro" id="IPR004791">
    <property type="entry name" value="UvrC"/>
</dbReference>
<dbReference type="InterPro" id="IPR001162">
    <property type="entry name" value="UvrC_RNase_H_dom"/>
</dbReference>
<dbReference type="InterPro" id="IPR038476">
    <property type="entry name" value="UvrC_RNase_H_dom_sf"/>
</dbReference>
<dbReference type="NCBIfam" id="TIGR00194">
    <property type="entry name" value="uvrC"/>
    <property type="match status" value="1"/>
</dbReference>
<dbReference type="PANTHER" id="PTHR30562:SF1">
    <property type="entry name" value="UVRABC SYSTEM PROTEIN C"/>
    <property type="match status" value="1"/>
</dbReference>
<dbReference type="PANTHER" id="PTHR30562">
    <property type="entry name" value="UVRC/OXIDOREDUCTASE"/>
    <property type="match status" value="1"/>
</dbReference>
<dbReference type="Pfam" id="PF01541">
    <property type="entry name" value="GIY-YIG"/>
    <property type="match status" value="1"/>
</dbReference>
<dbReference type="Pfam" id="PF14520">
    <property type="entry name" value="HHH_5"/>
    <property type="match status" value="1"/>
</dbReference>
<dbReference type="Pfam" id="PF02151">
    <property type="entry name" value="UVR"/>
    <property type="match status" value="1"/>
</dbReference>
<dbReference type="Pfam" id="PF22920">
    <property type="entry name" value="UvrC_RNaseH"/>
    <property type="match status" value="1"/>
</dbReference>
<dbReference type="Pfam" id="PF08459">
    <property type="entry name" value="UvrC_RNaseH_dom"/>
    <property type="match status" value="1"/>
</dbReference>
<dbReference type="SMART" id="SM00465">
    <property type="entry name" value="GIYc"/>
    <property type="match status" value="1"/>
</dbReference>
<dbReference type="SUPFAM" id="SSF46600">
    <property type="entry name" value="C-terminal UvrC-binding domain of UvrB"/>
    <property type="match status" value="1"/>
</dbReference>
<dbReference type="SUPFAM" id="SSF82771">
    <property type="entry name" value="GIY-YIG endonuclease"/>
    <property type="match status" value="1"/>
</dbReference>
<dbReference type="SUPFAM" id="SSF47781">
    <property type="entry name" value="RuvA domain 2-like"/>
    <property type="match status" value="1"/>
</dbReference>
<dbReference type="PROSITE" id="PS50164">
    <property type="entry name" value="GIY_YIG"/>
    <property type="match status" value="1"/>
</dbReference>
<dbReference type="PROSITE" id="PS50151">
    <property type="entry name" value="UVR"/>
    <property type="match status" value="1"/>
</dbReference>
<dbReference type="PROSITE" id="PS50165">
    <property type="entry name" value="UVRC"/>
    <property type="match status" value="1"/>
</dbReference>
<name>UVRC_STRPC</name>
<reference key="1">
    <citation type="journal article" date="2006" name="Proc. Natl. Acad. Sci. U.S.A.">
        <title>Molecular genetic anatomy of inter- and intraserotype variation in the human bacterial pathogen group A Streptococcus.</title>
        <authorList>
            <person name="Beres S.B."/>
            <person name="Richter E.W."/>
            <person name="Nagiec M.J."/>
            <person name="Sumby P."/>
            <person name="Porcella S.F."/>
            <person name="DeLeo F.R."/>
            <person name="Musser J.M."/>
        </authorList>
    </citation>
    <scope>NUCLEOTIDE SEQUENCE [LARGE SCALE GENOMIC DNA]</scope>
    <source>
        <strain>MGAS9429</strain>
    </source>
</reference>
<proteinExistence type="inferred from homology"/>
<accession>Q1JLX6</accession>
<protein>
    <recommendedName>
        <fullName evidence="1">UvrABC system protein C</fullName>
        <shortName evidence="1">Protein UvrC</shortName>
    </recommendedName>
    <alternativeName>
        <fullName evidence="1">Excinuclease ABC subunit C</fullName>
    </alternativeName>
</protein>
<gene>
    <name evidence="1" type="primary">uvrC</name>
    <name type="ordered locus">MGAS9429_Spy0905</name>
</gene>
<feature type="chain" id="PRO_0000264959" description="UvrABC system protein C">
    <location>
        <begin position="1"/>
        <end position="598"/>
    </location>
</feature>
<feature type="domain" description="GIY-YIG" evidence="1">
    <location>
        <begin position="14"/>
        <end position="91"/>
    </location>
</feature>
<feature type="domain" description="UVR" evidence="1">
    <location>
        <begin position="196"/>
        <end position="231"/>
    </location>
</feature>
<sequence length="598" mass="68932">MNELIKHKLELLPDSPGCYLHKDKEGTIIYVGKAKNLKKRVRSYFRGSHDTKTELLVSEIVDFEYIVTESDTEALLLEINLIQKNMPKYNIKLKDDKSYPFLKITNESFPRLVITRYIKKNDGLYFGPYPDSYTANEVKKLLDRIFPFKKCKNPINKVCFYYHLGQCCAHTICHTDKAYWDRLIDDVKHFLNGKDDKIIEDLRSKMLAASEEMAFERAAEYRDLISGIATMRTKQRVMSKDLQDRDIFGYYVDKGWMCVQVFFVRQGKLIQRDVNLFPYYNDAEEDFLTYMGQFYQDKQHFIPKEVFIPEAIDEELVAAIVPTKIIKPKRGEKKQLVALATKNARVSLQQKFDLLEKDIKKTSGAIENLGQLLRIDKPVRIEAFDNSNIQGTSPVAAMVVFVDGKPSKKDYRKFKIKTVVGPDDYASMREVLFRRYSRVKKEGLQAPNLIIVDGGVGQVNVAKDVIEKQLGLTIPVAGLQKNDKHQTHDLLFGNPLEVVPLPRRSEEFFLLHRIQDEVHRFAVTFHRQVRRKNSFSSTLDHISGLGPKRKQLLLRHFKTITAIASATSEEIQALGIPKTVVEAIQQQITDNKNDRSSP</sequence>
<organism>
    <name type="scientific">Streptococcus pyogenes serotype M12 (strain MGAS9429)</name>
    <dbReference type="NCBI Taxonomy" id="370551"/>
    <lineage>
        <taxon>Bacteria</taxon>
        <taxon>Bacillati</taxon>
        <taxon>Bacillota</taxon>
        <taxon>Bacilli</taxon>
        <taxon>Lactobacillales</taxon>
        <taxon>Streptococcaceae</taxon>
        <taxon>Streptococcus</taxon>
    </lineage>
</organism>
<keyword id="KW-0963">Cytoplasm</keyword>
<keyword id="KW-0227">DNA damage</keyword>
<keyword id="KW-0228">DNA excision</keyword>
<keyword id="KW-0234">DNA repair</keyword>
<keyword id="KW-0267">Excision nuclease</keyword>
<keyword id="KW-0742">SOS response</keyword>